<evidence type="ECO:0000269" key="1">
    <source>
    </source>
</evidence>
<evidence type="ECO:0000303" key="2">
    <source>
    </source>
</evidence>
<evidence type="ECO:0000312" key="3">
    <source>
        <dbReference type="EMBL" id="QNV50530.1"/>
    </source>
</evidence>
<proteinExistence type="evidence at protein level"/>
<organism>
    <name type="scientific">Escherichia coli (strain K12)</name>
    <dbReference type="NCBI Taxonomy" id="83333"/>
    <lineage>
        <taxon>Bacteria</taxon>
        <taxon>Pseudomonadati</taxon>
        <taxon>Pseudomonadota</taxon>
        <taxon>Gammaproteobacteria</taxon>
        <taxon>Enterobacterales</taxon>
        <taxon>Enterobacteriaceae</taxon>
        <taxon>Escherichia</taxon>
    </lineage>
</organism>
<name>YDGV_ECOLI</name>
<protein>
    <recommendedName>
        <fullName evidence="2">Protein YdgV</fullName>
    </recommendedName>
</protein>
<sequence length="33" mass="3906">MDNLFRTLFSTFTHLRTSSTILLVGEQHWRNAL</sequence>
<gene>
    <name evidence="2" type="primary">ydgV</name>
    <name evidence="3" type="ordered locus">b4777</name>
</gene>
<keyword id="KW-1185">Reference proteome</keyword>
<feature type="chain" id="PRO_0000447145" description="Protein YdgV">
    <location>
        <begin position="1"/>
        <end position="33"/>
    </location>
</feature>
<accession>P0DSF5</accession>
<accession>A0A7H2C783</accession>
<dbReference type="EMBL" id="U00096">
    <property type="protein sequence ID" value="QNV50530.1"/>
    <property type="molecule type" value="Genomic_DNA"/>
</dbReference>
<dbReference type="InParanoid" id="P0DSF5"/>
<dbReference type="BioCyc" id="EcoCyc:MONOMER0-4489"/>
<dbReference type="Proteomes" id="UP000000625">
    <property type="component" value="Chromosome"/>
</dbReference>
<dbReference type="InterPro" id="IPR057002">
    <property type="entry name" value="YdgV"/>
</dbReference>
<dbReference type="Pfam" id="PF23502">
    <property type="entry name" value="YdgV"/>
    <property type="match status" value="1"/>
</dbReference>
<reference key="1">
    <citation type="journal article" date="1997" name="Science">
        <title>The complete genome sequence of Escherichia coli K-12.</title>
        <authorList>
            <person name="Blattner F.R."/>
            <person name="Plunkett G. III"/>
            <person name="Bloch C.A."/>
            <person name="Perna N.T."/>
            <person name="Burland V."/>
            <person name="Riley M."/>
            <person name="Collado-Vides J."/>
            <person name="Glasner J.D."/>
            <person name="Rode C.K."/>
            <person name="Mayhew G.F."/>
            <person name="Gregor J."/>
            <person name="Davis N.W."/>
            <person name="Kirkpatrick H.A."/>
            <person name="Goeden M.A."/>
            <person name="Rose D.J."/>
            <person name="Mau B."/>
            <person name="Shao Y."/>
        </authorList>
    </citation>
    <scope>NUCLEOTIDE SEQUENCE [LARGE SCALE GENOMIC DNA]</scope>
    <source>
        <strain>K12 / MG1655 / ATCC 47076</strain>
    </source>
</reference>
<reference key="2">
    <citation type="journal article" date="2019" name="MBio">
        <title>Identifying small proteins by ribosome profiling with stalled initiation complexes.</title>
        <authorList>
            <person name="Weaver J."/>
            <person name="Mohammad F."/>
            <person name="Buskirk A.R."/>
            <person name="Storz G."/>
        </authorList>
    </citation>
    <scope>IDENTIFICATION</scope>
    <scope>INDUCTION</scope>
    <source>
        <strain>K12 / MG1655 / ATCC 47076</strain>
    </source>
</reference>
<comment type="induction">
    <text evidence="1">Expressed at high levels equally in exponential and stationary phase in rich medium (at protein level).</text>
</comment>